<protein>
    <recommendedName>
        <fullName evidence="1">Small ribosomal subunit protein uS15</fullName>
    </recommendedName>
    <alternativeName>
        <fullName evidence="2">30S ribosomal protein S15</fullName>
    </alternativeName>
</protein>
<dbReference type="EMBL" id="CP000302">
    <property type="protein sequence ID" value="ABE54298.1"/>
    <property type="molecule type" value="Genomic_DNA"/>
</dbReference>
<dbReference type="RefSeq" id="WP_011495462.1">
    <property type="nucleotide sequence ID" value="NC_007954.1"/>
</dbReference>
<dbReference type="SMR" id="Q12QH8"/>
<dbReference type="STRING" id="318161.Sden_1010"/>
<dbReference type="KEGG" id="sdn:Sden_1010"/>
<dbReference type="eggNOG" id="COG0184">
    <property type="taxonomic scope" value="Bacteria"/>
</dbReference>
<dbReference type="HOGENOM" id="CLU_148518_0_0_6"/>
<dbReference type="OrthoDB" id="9799262at2"/>
<dbReference type="Proteomes" id="UP000001982">
    <property type="component" value="Chromosome"/>
</dbReference>
<dbReference type="GO" id="GO:0022627">
    <property type="term" value="C:cytosolic small ribosomal subunit"/>
    <property type="evidence" value="ECO:0007669"/>
    <property type="project" value="TreeGrafter"/>
</dbReference>
<dbReference type="GO" id="GO:0019843">
    <property type="term" value="F:rRNA binding"/>
    <property type="evidence" value="ECO:0007669"/>
    <property type="project" value="UniProtKB-UniRule"/>
</dbReference>
<dbReference type="GO" id="GO:0003735">
    <property type="term" value="F:structural constituent of ribosome"/>
    <property type="evidence" value="ECO:0007669"/>
    <property type="project" value="InterPro"/>
</dbReference>
<dbReference type="GO" id="GO:0006412">
    <property type="term" value="P:translation"/>
    <property type="evidence" value="ECO:0007669"/>
    <property type="project" value="UniProtKB-UniRule"/>
</dbReference>
<dbReference type="CDD" id="cd00353">
    <property type="entry name" value="Ribosomal_S15p_S13e"/>
    <property type="match status" value="1"/>
</dbReference>
<dbReference type="FunFam" id="1.10.287.10:FF:000002">
    <property type="entry name" value="30S ribosomal protein S15"/>
    <property type="match status" value="1"/>
</dbReference>
<dbReference type="Gene3D" id="6.10.250.3130">
    <property type="match status" value="1"/>
</dbReference>
<dbReference type="Gene3D" id="1.10.287.10">
    <property type="entry name" value="S15/NS1, RNA-binding"/>
    <property type="match status" value="1"/>
</dbReference>
<dbReference type="HAMAP" id="MF_01343_B">
    <property type="entry name" value="Ribosomal_uS15_B"/>
    <property type="match status" value="1"/>
</dbReference>
<dbReference type="InterPro" id="IPR000589">
    <property type="entry name" value="Ribosomal_uS15"/>
</dbReference>
<dbReference type="InterPro" id="IPR005290">
    <property type="entry name" value="Ribosomal_uS15_bac-type"/>
</dbReference>
<dbReference type="InterPro" id="IPR009068">
    <property type="entry name" value="uS15_NS1_RNA-bd_sf"/>
</dbReference>
<dbReference type="NCBIfam" id="TIGR00952">
    <property type="entry name" value="S15_bact"/>
    <property type="match status" value="1"/>
</dbReference>
<dbReference type="PANTHER" id="PTHR23321">
    <property type="entry name" value="RIBOSOMAL PROTEIN S15, BACTERIAL AND ORGANELLAR"/>
    <property type="match status" value="1"/>
</dbReference>
<dbReference type="PANTHER" id="PTHR23321:SF26">
    <property type="entry name" value="SMALL RIBOSOMAL SUBUNIT PROTEIN US15M"/>
    <property type="match status" value="1"/>
</dbReference>
<dbReference type="Pfam" id="PF00312">
    <property type="entry name" value="Ribosomal_S15"/>
    <property type="match status" value="1"/>
</dbReference>
<dbReference type="SMART" id="SM01387">
    <property type="entry name" value="Ribosomal_S15"/>
    <property type="match status" value="1"/>
</dbReference>
<dbReference type="SUPFAM" id="SSF47060">
    <property type="entry name" value="S15/NS1 RNA-binding domain"/>
    <property type="match status" value="1"/>
</dbReference>
<dbReference type="PROSITE" id="PS00362">
    <property type="entry name" value="RIBOSOMAL_S15"/>
    <property type="match status" value="1"/>
</dbReference>
<comment type="function">
    <text evidence="1">One of the primary rRNA binding proteins, it binds directly to 16S rRNA where it helps nucleate assembly of the platform of the 30S subunit by binding and bridging several RNA helices of the 16S rRNA.</text>
</comment>
<comment type="function">
    <text evidence="1">Forms an intersubunit bridge (bridge B4) with the 23S rRNA of the 50S subunit in the ribosome.</text>
</comment>
<comment type="subunit">
    <text evidence="1">Part of the 30S ribosomal subunit. Forms a bridge to the 50S subunit in the 70S ribosome, contacting the 23S rRNA.</text>
</comment>
<comment type="similarity">
    <text evidence="1">Belongs to the universal ribosomal protein uS15 family.</text>
</comment>
<keyword id="KW-1185">Reference proteome</keyword>
<keyword id="KW-0687">Ribonucleoprotein</keyword>
<keyword id="KW-0689">Ribosomal protein</keyword>
<keyword id="KW-0694">RNA-binding</keyword>
<keyword id="KW-0699">rRNA-binding</keyword>
<proteinExistence type="inferred from homology"/>
<sequence length="89" mass="10124">MSLSTEAKAKILADFGRCENDSGSTEVQVALLTAQINHLQGHFKTHIHDHHSRRGLLRMVSARRKLTAYLKRTDNARYTALIQKLGLRR</sequence>
<name>RS15_SHEDO</name>
<organism>
    <name type="scientific">Shewanella denitrificans (strain OS217 / ATCC BAA-1090 / DSM 15013)</name>
    <dbReference type="NCBI Taxonomy" id="318161"/>
    <lineage>
        <taxon>Bacteria</taxon>
        <taxon>Pseudomonadati</taxon>
        <taxon>Pseudomonadota</taxon>
        <taxon>Gammaproteobacteria</taxon>
        <taxon>Alteromonadales</taxon>
        <taxon>Shewanellaceae</taxon>
        <taxon>Shewanella</taxon>
    </lineage>
</organism>
<accession>Q12QH8</accession>
<reference key="1">
    <citation type="submission" date="2006-03" db="EMBL/GenBank/DDBJ databases">
        <title>Complete sequence of Shewanella denitrificans OS217.</title>
        <authorList>
            <consortium name="US DOE Joint Genome Institute"/>
            <person name="Copeland A."/>
            <person name="Lucas S."/>
            <person name="Lapidus A."/>
            <person name="Barry K."/>
            <person name="Detter J.C."/>
            <person name="Glavina del Rio T."/>
            <person name="Hammon N."/>
            <person name="Israni S."/>
            <person name="Dalin E."/>
            <person name="Tice H."/>
            <person name="Pitluck S."/>
            <person name="Brettin T."/>
            <person name="Bruce D."/>
            <person name="Han C."/>
            <person name="Tapia R."/>
            <person name="Gilna P."/>
            <person name="Kiss H."/>
            <person name="Schmutz J."/>
            <person name="Larimer F."/>
            <person name="Land M."/>
            <person name="Hauser L."/>
            <person name="Kyrpides N."/>
            <person name="Lykidis A."/>
            <person name="Richardson P."/>
        </authorList>
    </citation>
    <scope>NUCLEOTIDE SEQUENCE [LARGE SCALE GENOMIC DNA]</scope>
    <source>
        <strain>OS217 / ATCC BAA-1090 / DSM 15013</strain>
    </source>
</reference>
<gene>
    <name evidence="1" type="primary">rpsO</name>
    <name type="ordered locus">Sden_1010</name>
</gene>
<evidence type="ECO:0000255" key="1">
    <source>
        <dbReference type="HAMAP-Rule" id="MF_01343"/>
    </source>
</evidence>
<evidence type="ECO:0000305" key="2"/>
<feature type="chain" id="PRO_1000054867" description="Small ribosomal subunit protein uS15">
    <location>
        <begin position="1"/>
        <end position="89"/>
    </location>
</feature>